<organismHost>
    <name type="scientific">Ovis aries</name>
    <name type="common">Sheep</name>
    <dbReference type="NCBI Taxonomy" id="9940"/>
</organismHost>
<protein>
    <recommendedName>
        <fullName>Nucleoprotein</fullName>
        <shortName>Protein N</shortName>
    </recommendedName>
    <alternativeName>
        <fullName>Nucleocapsid protein</fullName>
    </alternativeName>
</protein>
<name>NCAP_ORSVW</name>
<feature type="chain" id="PRO_0000142650" description="Nucleoprotein">
    <location>
        <begin position="1"/>
        <end position="391"/>
    </location>
</feature>
<feature type="region of interest" description="Interaction with the phosphoprotein" evidence="2">
    <location>
        <begin position="244"/>
        <end position="290"/>
    </location>
</feature>
<feature type="region of interest" description="Interaction with the phosphoprotein" evidence="2">
    <location>
        <begin position="338"/>
        <end position="364"/>
    </location>
</feature>
<reference key="1">
    <citation type="journal article" date="1994" name="J. Gen. Virol.">
        <title>Molecular cloning and sequence analysis of the phosphoprotein, nucleocapsid protein, matrix protein and 22K (M2) protein of the ovine respiratory syncytial virus.</title>
        <authorList>
            <person name="Alansari H.M."/>
            <person name="Potgieter L.N.D."/>
        </authorList>
    </citation>
    <scope>NUCLEOTIDE SEQUENCE [MRNA]</scope>
</reference>
<dbReference type="EMBL" id="U07233">
    <property type="protein sequence ID" value="AAA62434.1"/>
    <property type="molecule type" value="mRNA"/>
</dbReference>
<dbReference type="SMR" id="Q83957"/>
<dbReference type="GO" id="GO:0019029">
    <property type="term" value="C:helical viral capsid"/>
    <property type="evidence" value="ECO:0007669"/>
    <property type="project" value="UniProtKB-KW"/>
</dbReference>
<dbReference type="GO" id="GO:0030430">
    <property type="term" value="C:host cell cytoplasm"/>
    <property type="evidence" value="ECO:0007669"/>
    <property type="project" value="UniProtKB-SubCell"/>
</dbReference>
<dbReference type="GO" id="GO:1990904">
    <property type="term" value="C:ribonucleoprotein complex"/>
    <property type="evidence" value="ECO:0007669"/>
    <property type="project" value="UniProtKB-KW"/>
</dbReference>
<dbReference type="GO" id="GO:0019013">
    <property type="term" value="C:viral nucleocapsid"/>
    <property type="evidence" value="ECO:0007669"/>
    <property type="project" value="UniProtKB-KW"/>
</dbReference>
<dbReference type="GO" id="GO:0030291">
    <property type="term" value="F:protein serine/threonine kinase inhibitor activity"/>
    <property type="evidence" value="ECO:0007669"/>
    <property type="project" value="UniProtKB-KW"/>
</dbReference>
<dbReference type="GO" id="GO:0003723">
    <property type="term" value="F:RNA binding"/>
    <property type="evidence" value="ECO:0007669"/>
    <property type="project" value="UniProtKB-KW"/>
</dbReference>
<dbReference type="GO" id="GO:0052170">
    <property type="term" value="P:symbiont-mediated suppression of host innate immune response"/>
    <property type="evidence" value="ECO:0007669"/>
    <property type="project" value="UniProtKB-KW"/>
</dbReference>
<dbReference type="GO" id="GO:0039580">
    <property type="term" value="P:symbiont-mediated suppression of host PKR/eIFalpha signaling"/>
    <property type="evidence" value="ECO:0007669"/>
    <property type="project" value="UniProtKB-KW"/>
</dbReference>
<dbReference type="GO" id="GO:0039502">
    <property type="term" value="P:symbiont-mediated suppression of host type I interferon-mediated signaling pathway"/>
    <property type="evidence" value="ECO:0007669"/>
    <property type="project" value="UniProtKB-KW"/>
</dbReference>
<dbReference type="InterPro" id="IPR004930">
    <property type="entry name" value="Pneumo_ncap"/>
</dbReference>
<dbReference type="Pfam" id="PF03246">
    <property type="entry name" value="Pneumo_ncap"/>
    <property type="match status" value="1"/>
</dbReference>
<evidence type="ECO:0000250" key="1">
    <source>
        <dbReference type="UniProtKB" id="P03418"/>
    </source>
</evidence>
<evidence type="ECO:0000250" key="2">
    <source>
        <dbReference type="UniProtKB" id="P22677"/>
    </source>
</evidence>
<evidence type="ECO:0000305" key="3"/>
<accession>Q83957</accession>
<keyword id="KW-0167">Capsid protein</keyword>
<keyword id="KW-1139">Helical capsid protein</keyword>
<keyword id="KW-1035">Host cytoplasm</keyword>
<keyword id="KW-0945">Host-virus interaction</keyword>
<keyword id="KW-1090">Inhibition of host innate immune response by virus</keyword>
<keyword id="KW-1114">Inhibition of host interferon signaling pathway by virus</keyword>
<keyword id="KW-1102">Inhibition of host PKR by virus</keyword>
<keyword id="KW-0922">Interferon antiviral system evasion</keyword>
<keyword id="KW-0687">Ribonucleoprotein</keyword>
<keyword id="KW-0694">RNA-binding</keyword>
<keyword id="KW-0899">Viral immunoevasion</keyword>
<keyword id="KW-0543">Viral nucleoprotein</keyword>
<keyword id="KW-0946">Virion</keyword>
<proteinExistence type="evidence at transcript level"/>
<sequence length="391" mass="43422">MALSKVKLNDTFNKDQLLSTSKYTIQRSTGDNIDIPNYDVQKHLNKLCGMLLITEDANHKFTGLIGMLYAMSRLGREDTLKILKDAGYQVKANGVDVITHRQDVNGKEMKFEVLTLVSLTSEVQVNIEVESRKSYKKMLKEMGEVAPEYRHDSPDCGMIVLCIAALVIAKLAAGDRSGLTAVIRRANNVLKNEIERYKGLIPKDVANSFYEVFEKYPHYIDVFVHFGIAQSSTRGGSRVEGIFAGLFMNAYGAGQVMLRWGVLAKSVKNIMLGHASVQAEMEQVVEVYEYAQKLGGEAGFYHILNNPKASLLSLTQFPNFSSVVLGNAAGLGIMGEYRGTPRNQDLYDAAKAYAEQLKENGVINYSVLDLTTEELEAIKNQLNPKDNDVEL</sequence>
<comment type="function">
    <text evidence="1">Encapsidates the viral RNA genome by forming a left-handed helical nucleocapsid that protects the RNA from nucleases. RNA replication depends on the availability of soluble nucleoprotein. The encapsidated genomic RNA is termed the NC and serves as template for transcription and replication.</text>
</comment>
<comment type="subunit">
    <text evidence="1">Homomultimerizes to form the nucleocapsid. Interacts with the phosphoprotein P. When in a monomeric RNA-free form, interacts with the phosphoprotein (via N-terminus). Interacts with protein M2-1; this interaction allows the association of nucleocapsid with the matrix protein.</text>
</comment>
<comment type="subcellular location">
    <subcellularLocation>
        <location evidence="1">Virion</location>
    </subcellularLocation>
    <subcellularLocation>
        <location evidence="1">Host cytoplasm</location>
    </subcellularLocation>
    <text evidence="1">Localizes in cytoplasmic inclusion bodies.</text>
</comment>
<comment type="similarity">
    <text evidence="3">Belongs to the paramyxoviruses nucleocapsid family.</text>
</comment>
<organism>
    <name type="scientific">Ovine respiratory syncytial virus (strain WSU 83-1578)</name>
    <name type="common">ORSV</name>
    <dbReference type="NCBI Taxonomy" id="79699"/>
    <lineage>
        <taxon>Viruses</taxon>
        <taxon>Riboviria</taxon>
        <taxon>Orthornavirae</taxon>
        <taxon>Negarnaviricota</taxon>
        <taxon>Haploviricotina</taxon>
        <taxon>Monjiviricetes</taxon>
        <taxon>Mononegavirales</taxon>
        <taxon>Pneumoviridae</taxon>
        <taxon>Ovine respiratory syncytial virus</taxon>
    </lineage>
</organism>
<gene>
    <name type="primary">N</name>
</gene>